<reference key="1">
    <citation type="journal article" date="2003" name="Lancet">
        <title>Genome sequence of Vibrio parahaemolyticus: a pathogenic mechanism distinct from that of V. cholerae.</title>
        <authorList>
            <person name="Makino K."/>
            <person name="Oshima K."/>
            <person name="Kurokawa K."/>
            <person name="Yokoyama K."/>
            <person name="Uda T."/>
            <person name="Tagomori K."/>
            <person name="Iijima Y."/>
            <person name="Najima M."/>
            <person name="Nakano M."/>
            <person name="Yamashita A."/>
            <person name="Kubota Y."/>
            <person name="Kimura S."/>
            <person name="Yasunaga T."/>
            <person name="Honda T."/>
            <person name="Shinagawa H."/>
            <person name="Hattori M."/>
            <person name="Iida T."/>
        </authorList>
    </citation>
    <scope>NUCLEOTIDE SEQUENCE [LARGE SCALE GENOMIC DNA]</scope>
    <source>
        <strain>RIMD 2210633</strain>
    </source>
</reference>
<organism>
    <name type="scientific">Vibrio parahaemolyticus serotype O3:K6 (strain RIMD 2210633)</name>
    <dbReference type="NCBI Taxonomy" id="223926"/>
    <lineage>
        <taxon>Bacteria</taxon>
        <taxon>Pseudomonadati</taxon>
        <taxon>Pseudomonadota</taxon>
        <taxon>Gammaproteobacteria</taxon>
        <taxon>Vibrionales</taxon>
        <taxon>Vibrionaceae</taxon>
        <taxon>Vibrio</taxon>
    </lineage>
</organism>
<comment type="function">
    <text evidence="1">Catalyzes the ATP-dependent phosphorylation of the 3-deoxy-D-manno-octulosonic acid (Kdo) residue in Kdo-lipid IV(A) at the 4-OH position.</text>
</comment>
<comment type="catalytic activity">
    <reaction evidence="1">
        <text>an alpha-Kdo-(2-&gt;6)-lipid IVA + ATP = a 4-O-phospho-alpha-Kdo-(2-&gt;6)-lipid IVA + ADP + H(+)</text>
        <dbReference type="Rhea" id="RHEA:74271"/>
        <dbReference type="ChEBI" id="CHEBI:15378"/>
        <dbReference type="ChEBI" id="CHEBI:30616"/>
        <dbReference type="ChEBI" id="CHEBI:176428"/>
        <dbReference type="ChEBI" id="CHEBI:193140"/>
        <dbReference type="ChEBI" id="CHEBI:456216"/>
        <dbReference type="EC" id="2.7.1.166"/>
    </reaction>
</comment>
<comment type="pathway">
    <text evidence="1">Bacterial outer membrane biogenesis; LPS core biosynthesis.</text>
</comment>
<comment type="subcellular location">
    <subcellularLocation>
        <location evidence="1">Cell inner membrane</location>
        <topology evidence="1">Peripheral membrane protein</topology>
        <orientation evidence="1">Cytoplasmic side</orientation>
    </subcellularLocation>
</comment>
<comment type="similarity">
    <text evidence="1">Belongs to the protein kinase superfamily. KdkA/RfaP family.</text>
</comment>
<sequence>MIQQYRDSNQVIWFDEELIEDPSQPIFDAEYWQSTNKVTGSASGRGTTWFVQLDTMQAALRHYRRGGLFGKLVKDNYLFSGWEQTRCAQEFQLLLTLINAGVHVPRPIAARAVKSGLTYQADLLSERIPNARDLVSILQEKPLPEGMYQKIGQEIAKMHNAGVNHTDLNIHNILIDDKDKVWIIDFDKCRKQEHGDWKKQNLERLLRSFKKELLKRQIHWKERDFAVLTEALSCLDIK</sequence>
<name>KDKA_VIBPA</name>
<proteinExistence type="inferred from homology"/>
<feature type="chain" id="PRO_0000194317" description="3-deoxy-D-manno-octulosonic acid kinase">
    <location>
        <begin position="1"/>
        <end position="238"/>
    </location>
</feature>
<feature type="active site" evidence="1">
    <location>
        <position position="167"/>
    </location>
</feature>
<gene>
    <name evidence="1" type="primary">kdkA</name>
    <name type="ordered locus">VP0196</name>
</gene>
<evidence type="ECO:0000255" key="1">
    <source>
        <dbReference type="HAMAP-Rule" id="MF_00521"/>
    </source>
</evidence>
<protein>
    <recommendedName>
        <fullName evidence="1">3-deoxy-D-manno-octulosonic acid kinase</fullName>
        <shortName evidence="1">Kdo kinase</shortName>
        <ecNumber evidence="1">2.7.1.166</ecNumber>
    </recommendedName>
</protein>
<keyword id="KW-0067">ATP-binding</keyword>
<keyword id="KW-0997">Cell inner membrane</keyword>
<keyword id="KW-1003">Cell membrane</keyword>
<keyword id="KW-0418">Kinase</keyword>
<keyword id="KW-0448">Lipopolysaccharide biosynthesis</keyword>
<keyword id="KW-0472">Membrane</keyword>
<keyword id="KW-0547">Nucleotide-binding</keyword>
<keyword id="KW-0808">Transferase</keyword>
<dbReference type="EC" id="2.7.1.166" evidence="1"/>
<dbReference type="EMBL" id="BA000031">
    <property type="protein sequence ID" value="BAC58459.1"/>
    <property type="molecule type" value="Genomic_DNA"/>
</dbReference>
<dbReference type="RefSeq" id="NP_796575.1">
    <property type="nucleotide sequence ID" value="NC_004603.1"/>
</dbReference>
<dbReference type="RefSeq" id="WP_005459670.1">
    <property type="nucleotide sequence ID" value="NC_004603.1"/>
</dbReference>
<dbReference type="SMR" id="Q87T74"/>
<dbReference type="GeneID" id="1187663"/>
<dbReference type="KEGG" id="vpa:VP0196"/>
<dbReference type="PATRIC" id="fig|223926.6.peg.188"/>
<dbReference type="eggNOG" id="COG3642">
    <property type="taxonomic scope" value="Bacteria"/>
</dbReference>
<dbReference type="HOGENOM" id="CLU_094226_0_0_6"/>
<dbReference type="UniPathway" id="UPA00958"/>
<dbReference type="Proteomes" id="UP000002493">
    <property type="component" value="Chromosome 1"/>
</dbReference>
<dbReference type="GO" id="GO:0005886">
    <property type="term" value="C:plasma membrane"/>
    <property type="evidence" value="ECO:0007669"/>
    <property type="project" value="UniProtKB-SubCell"/>
</dbReference>
<dbReference type="GO" id="GO:0005524">
    <property type="term" value="F:ATP binding"/>
    <property type="evidence" value="ECO:0007669"/>
    <property type="project" value="UniProtKB-UniRule"/>
</dbReference>
<dbReference type="GO" id="GO:0004672">
    <property type="term" value="F:protein kinase activity"/>
    <property type="evidence" value="ECO:0007669"/>
    <property type="project" value="InterPro"/>
</dbReference>
<dbReference type="GO" id="GO:0009244">
    <property type="term" value="P:lipopolysaccharide core region biosynthetic process"/>
    <property type="evidence" value="ECO:0007669"/>
    <property type="project" value="UniProtKB-UniRule"/>
</dbReference>
<dbReference type="Gene3D" id="1.10.510.10">
    <property type="entry name" value="Transferase(Phosphotransferase) domain 1"/>
    <property type="match status" value="1"/>
</dbReference>
<dbReference type="HAMAP" id="MF_00521">
    <property type="entry name" value="KDO_kinase"/>
    <property type="match status" value="1"/>
</dbReference>
<dbReference type="InterPro" id="IPR022826">
    <property type="entry name" value="KDO_kinase"/>
</dbReference>
<dbReference type="InterPro" id="IPR011009">
    <property type="entry name" value="Kinase-like_dom_sf"/>
</dbReference>
<dbReference type="InterPro" id="IPR000719">
    <property type="entry name" value="Prot_kinase_dom"/>
</dbReference>
<dbReference type="NCBIfam" id="NF002475">
    <property type="entry name" value="PRK01723.1"/>
    <property type="match status" value="1"/>
</dbReference>
<dbReference type="Pfam" id="PF06293">
    <property type="entry name" value="Kdo"/>
    <property type="match status" value="1"/>
</dbReference>
<dbReference type="SUPFAM" id="SSF56112">
    <property type="entry name" value="Protein kinase-like (PK-like)"/>
    <property type="match status" value="1"/>
</dbReference>
<accession>Q87T74</accession>